<organism>
    <name type="scientific">Streptococcus pneumoniae (strain ATCC 700669 / Spain 23F-1)</name>
    <dbReference type="NCBI Taxonomy" id="561276"/>
    <lineage>
        <taxon>Bacteria</taxon>
        <taxon>Bacillati</taxon>
        <taxon>Bacillota</taxon>
        <taxon>Bacilli</taxon>
        <taxon>Lactobacillales</taxon>
        <taxon>Streptococcaceae</taxon>
        <taxon>Streptococcus</taxon>
    </lineage>
</organism>
<accession>B8ZMH8</accession>
<name>NRDR_STRPJ</name>
<reference key="1">
    <citation type="journal article" date="2009" name="J. Bacteriol.">
        <title>Role of conjugative elements in the evolution of the multidrug-resistant pandemic clone Streptococcus pneumoniae Spain23F ST81.</title>
        <authorList>
            <person name="Croucher N.J."/>
            <person name="Walker D."/>
            <person name="Romero P."/>
            <person name="Lennard N."/>
            <person name="Paterson G.K."/>
            <person name="Bason N.C."/>
            <person name="Mitchell A.M."/>
            <person name="Quail M.A."/>
            <person name="Andrew P.W."/>
            <person name="Parkhill J."/>
            <person name="Bentley S.D."/>
            <person name="Mitchell T.J."/>
        </authorList>
    </citation>
    <scope>NUCLEOTIDE SEQUENCE [LARGE SCALE GENOMIC DNA]</scope>
    <source>
        <strain>ATCC 700669 / Spain 23F-1</strain>
    </source>
</reference>
<keyword id="KW-0067">ATP-binding</keyword>
<keyword id="KW-0238">DNA-binding</keyword>
<keyword id="KW-0479">Metal-binding</keyword>
<keyword id="KW-0547">Nucleotide-binding</keyword>
<keyword id="KW-0678">Repressor</keyword>
<keyword id="KW-0804">Transcription</keyword>
<keyword id="KW-0805">Transcription regulation</keyword>
<keyword id="KW-0862">Zinc</keyword>
<keyword id="KW-0863">Zinc-finger</keyword>
<comment type="function">
    <text evidence="1">Negatively regulates transcription of bacterial ribonucleotide reductase nrd genes and operons by binding to NrdR-boxes.</text>
</comment>
<comment type="cofactor">
    <cofactor evidence="1">
        <name>Zn(2+)</name>
        <dbReference type="ChEBI" id="CHEBI:29105"/>
    </cofactor>
    <text evidence="1">Binds 1 zinc ion.</text>
</comment>
<comment type="similarity">
    <text evidence="1">Belongs to the NrdR family.</text>
</comment>
<protein>
    <recommendedName>
        <fullName evidence="1">Transcriptional repressor NrdR</fullName>
    </recommendedName>
</protein>
<evidence type="ECO:0000255" key="1">
    <source>
        <dbReference type="HAMAP-Rule" id="MF_00440"/>
    </source>
</evidence>
<evidence type="ECO:0000256" key="2">
    <source>
        <dbReference type="SAM" id="MobiDB-lite"/>
    </source>
</evidence>
<gene>
    <name evidence="1" type="primary">nrdR</name>
    <name type="ordered locus">SPN23F17140</name>
</gene>
<sequence length="157" mass="18380">MRCPKCGATKSSVIDSRQAEEGNTIRRRRECDECQHRFTTYERVEERTLVVVKKDGTREQFSRDKIFNGIIRSAQKRPVSSDEINMVVNRIEQKLRGRNENEIQSEDIGSLVMEELAELDEITYVRFASVYRSFKDVSELESLLQQITQSSKKKKER</sequence>
<proteinExistence type="inferred from homology"/>
<dbReference type="EMBL" id="FM211187">
    <property type="protein sequence ID" value="CAR69485.1"/>
    <property type="molecule type" value="Genomic_DNA"/>
</dbReference>
<dbReference type="RefSeq" id="WP_001203672.1">
    <property type="nucleotide sequence ID" value="NC_011900.1"/>
</dbReference>
<dbReference type="SMR" id="B8ZMH8"/>
<dbReference type="GeneID" id="93740109"/>
<dbReference type="KEGG" id="sne:SPN23F17140"/>
<dbReference type="HOGENOM" id="CLU_108412_0_0_9"/>
<dbReference type="GO" id="GO:0005524">
    <property type="term" value="F:ATP binding"/>
    <property type="evidence" value="ECO:0007669"/>
    <property type="project" value="UniProtKB-KW"/>
</dbReference>
<dbReference type="GO" id="GO:0003677">
    <property type="term" value="F:DNA binding"/>
    <property type="evidence" value="ECO:0007669"/>
    <property type="project" value="UniProtKB-KW"/>
</dbReference>
<dbReference type="GO" id="GO:0008270">
    <property type="term" value="F:zinc ion binding"/>
    <property type="evidence" value="ECO:0007669"/>
    <property type="project" value="UniProtKB-UniRule"/>
</dbReference>
<dbReference type="GO" id="GO:0045892">
    <property type="term" value="P:negative regulation of DNA-templated transcription"/>
    <property type="evidence" value="ECO:0007669"/>
    <property type="project" value="UniProtKB-UniRule"/>
</dbReference>
<dbReference type="HAMAP" id="MF_00440">
    <property type="entry name" value="NrdR"/>
    <property type="match status" value="1"/>
</dbReference>
<dbReference type="InterPro" id="IPR005144">
    <property type="entry name" value="ATP-cone_dom"/>
</dbReference>
<dbReference type="InterPro" id="IPR055173">
    <property type="entry name" value="NrdR-like_N"/>
</dbReference>
<dbReference type="InterPro" id="IPR003796">
    <property type="entry name" value="RNR_NrdR-like"/>
</dbReference>
<dbReference type="NCBIfam" id="TIGR00244">
    <property type="entry name" value="transcriptional regulator NrdR"/>
    <property type="match status" value="1"/>
</dbReference>
<dbReference type="PANTHER" id="PTHR30455">
    <property type="entry name" value="TRANSCRIPTIONAL REPRESSOR NRDR"/>
    <property type="match status" value="1"/>
</dbReference>
<dbReference type="PANTHER" id="PTHR30455:SF2">
    <property type="entry name" value="TRANSCRIPTIONAL REPRESSOR NRDR"/>
    <property type="match status" value="1"/>
</dbReference>
<dbReference type="Pfam" id="PF03477">
    <property type="entry name" value="ATP-cone"/>
    <property type="match status" value="1"/>
</dbReference>
<dbReference type="Pfam" id="PF22811">
    <property type="entry name" value="Zn_ribbon_NrdR"/>
    <property type="match status" value="1"/>
</dbReference>
<dbReference type="PROSITE" id="PS51161">
    <property type="entry name" value="ATP_CONE"/>
    <property type="match status" value="1"/>
</dbReference>
<feature type="chain" id="PRO_1000191816" description="Transcriptional repressor NrdR">
    <location>
        <begin position="1"/>
        <end position="157"/>
    </location>
</feature>
<feature type="domain" description="ATP-cone" evidence="1">
    <location>
        <begin position="49"/>
        <end position="139"/>
    </location>
</feature>
<feature type="zinc finger region" evidence="1">
    <location>
        <begin position="3"/>
        <end position="34"/>
    </location>
</feature>
<feature type="region of interest" description="Disordered" evidence="2">
    <location>
        <begin position="1"/>
        <end position="22"/>
    </location>
</feature>